<keyword id="KW-0963">Cytoplasm</keyword>
<keyword id="KW-0251">Elongation factor</keyword>
<keyword id="KW-0648">Protein biosynthesis</keyword>
<sequence length="192" mass="21413">MAVVKSSEIEKGSFLLIKGAPHIVLEREFSKTGRGGAIVRLKLKNLKNKFVIRETLKGADTAEAIEIYEVSAQYLYKDKDVLVFMDLETYDQVSLDLKESANLQDKVPFLQESEIYSLVTFDNVVIDIKLAPKIAFEVVEVEAAVKGDTVTNAMKNITLNTGLVVKAPLFINVGDKVLINSETKEYAERIKN</sequence>
<feature type="chain" id="PRO_1000117888" description="Elongation factor P">
    <location>
        <begin position="1"/>
        <end position="192"/>
    </location>
</feature>
<proteinExistence type="inferred from homology"/>
<dbReference type="EMBL" id="CP001205">
    <property type="protein sequence ID" value="ACK74480.1"/>
    <property type="molecule type" value="Genomic_DNA"/>
</dbReference>
<dbReference type="RefSeq" id="WP_002656805.1">
    <property type="nucleotide sequence ID" value="NC_011728.1"/>
</dbReference>
<dbReference type="SMR" id="B7J1E4"/>
<dbReference type="GeneID" id="56567644"/>
<dbReference type="KEGG" id="bbz:BbuZS7_0219"/>
<dbReference type="HOGENOM" id="CLU_074944_0_2_12"/>
<dbReference type="UniPathway" id="UPA00345"/>
<dbReference type="Proteomes" id="UP000006901">
    <property type="component" value="Chromosome"/>
</dbReference>
<dbReference type="GO" id="GO:0005737">
    <property type="term" value="C:cytoplasm"/>
    <property type="evidence" value="ECO:0007669"/>
    <property type="project" value="UniProtKB-SubCell"/>
</dbReference>
<dbReference type="GO" id="GO:0003746">
    <property type="term" value="F:translation elongation factor activity"/>
    <property type="evidence" value="ECO:0007669"/>
    <property type="project" value="UniProtKB-UniRule"/>
</dbReference>
<dbReference type="GO" id="GO:0043043">
    <property type="term" value="P:peptide biosynthetic process"/>
    <property type="evidence" value="ECO:0007669"/>
    <property type="project" value="InterPro"/>
</dbReference>
<dbReference type="CDD" id="cd04470">
    <property type="entry name" value="S1_EF-P_repeat_1"/>
    <property type="match status" value="1"/>
</dbReference>
<dbReference type="CDD" id="cd05794">
    <property type="entry name" value="S1_EF-P_repeat_2"/>
    <property type="match status" value="1"/>
</dbReference>
<dbReference type="FunFam" id="2.40.50.140:FF:000004">
    <property type="entry name" value="Elongation factor P"/>
    <property type="match status" value="1"/>
</dbReference>
<dbReference type="Gene3D" id="2.30.30.30">
    <property type="match status" value="1"/>
</dbReference>
<dbReference type="Gene3D" id="2.40.50.140">
    <property type="entry name" value="Nucleic acid-binding proteins"/>
    <property type="match status" value="2"/>
</dbReference>
<dbReference type="HAMAP" id="MF_00141">
    <property type="entry name" value="EF_P"/>
    <property type="match status" value="1"/>
</dbReference>
<dbReference type="InterPro" id="IPR015365">
    <property type="entry name" value="Elong-fact-P_C"/>
</dbReference>
<dbReference type="InterPro" id="IPR012340">
    <property type="entry name" value="NA-bd_OB-fold"/>
</dbReference>
<dbReference type="InterPro" id="IPR014722">
    <property type="entry name" value="Rib_uL2_dom2"/>
</dbReference>
<dbReference type="InterPro" id="IPR020599">
    <property type="entry name" value="Transl_elong_fac_P/YeiP"/>
</dbReference>
<dbReference type="InterPro" id="IPR013185">
    <property type="entry name" value="Transl_elong_KOW-like"/>
</dbReference>
<dbReference type="InterPro" id="IPR001059">
    <property type="entry name" value="Transl_elong_P/YeiP_cen"/>
</dbReference>
<dbReference type="InterPro" id="IPR011768">
    <property type="entry name" value="Transl_elongation_fac_P"/>
</dbReference>
<dbReference type="InterPro" id="IPR008991">
    <property type="entry name" value="Translation_prot_SH3-like_sf"/>
</dbReference>
<dbReference type="NCBIfam" id="TIGR00038">
    <property type="entry name" value="efp"/>
    <property type="match status" value="1"/>
</dbReference>
<dbReference type="NCBIfam" id="NF001810">
    <property type="entry name" value="PRK00529.1"/>
    <property type="match status" value="1"/>
</dbReference>
<dbReference type="PANTHER" id="PTHR30053">
    <property type="entry name" value="ELONGATION FACTOR P"/>
    <property type="match status" value="1"/>
</dbReference>
<dbReference type="PANTHER" id="PTHR30053:SF14">
    <property type="entry name" value="TRANSLATION ELONGATION FACTOR KOW-LIKE DOMAIN-CONTAINING PROTEIN"/>
    <property type="match status" value="1"/>
</dbReference>
<dbReference type="Pfam" id="PF01132">
    <property type="entry name" value="EFP"/>
    <property type="match status" value="1"/>
</dbReference>
<dbReference type="Pfam" id="PF08207">
    <property type="entry name" value="EFP_N"/>
    <property type="match status" value="1"/>
</dbReference>
<dbReference type="Pfam" id="PF09285">
    <property type="entry name" value="Elong-fact-P_C"/>
    <property type="match status" value="1"/>
</dbReference>
<dbReference type="PIRSF" id="PIRSF005901">
    <property type="entry name" value="EF-P"/>
    <property type="match status" value="1"/>
</dbReference>
<dbReference type="SMART" id="SM01185">
    <property type="entry name" value="EFP"/>
    <property type="match status" value="1"/>
</dbReference>
<dbReference type="SMART" id="SM00841">
    <property type="entry name" value="Elong-fact-P_C"/>
    <property type="match status" value="1"/>
</dbReference>
<dbReference type="SUPFAM" id="SSF50249">
    <property type="entry name" value="Nucleic acid-binding proteins"/>
    <property type="match status" value="2"/>
</dbReference>
<dbReference type="SUPFAM" id="SSF50104">
    <property type="entry name" value="Translation proteins SH3-like domain"/>
    <property type="match status" value="1"/>
</dbReference>
<gene>
    <name evidence="1" type="primary">efp</name>
    <name type="ordered locus">BbuZS7_0219</name>
</gene>
<comment type="function">
    <text evidence="1">Involved in peptide bond synthesis. Stimulates efficient translation and peptide-bond synthesis on native or reconstituted 70S ribosomes in vitro. Probably functions indirectly by altering the affinity of the ribosome for aminoacyl-tRNA, thus increasing their reactivity as acceptors for peptidyl transferase.</text>
</comment>
<comment type="pathway">
    <text evidence="1">Protein biosynthesis; polypeptide chain elongation.</text>
</comment>
<comment type="subcellular location">
    <subcellularLocation>
        <location evidence="1">Cytoplasm</location>
    </subcellularLocation>
</comment>
<comment type="similarity">
    <text evidence="1">Belongs to the elongation factor P family.</text>
</comment>
<reference key="1">
    <citation type="journal article" date="2011" name="J. Bacteriol.">
        <title>Whole-genome sequences of thirteen isolates of Borrelia burgdorferi.</title>
        <authorList>
            <person name="Schutzer S.E."/>
            <person name="Fraser-Liggett C.M."/>
            <person name="Casjens S.R."/>
            <person name="Qiu W.G."/>
            <person name="Dunn J.J."/>
            <person name="Mongodin E.F."/>
            <person name="Luft B.J."/>
        </authorList>
    </citation>
    <scope>NUCLEOTIDE SEQUENCE [LARGE SCALE GENOMIC DNA]</scope>
    <source>
        <strain>ZS7</strain>
    </source>
</reference>
<accession>B7J1E4</accession>
<name>EFP_BORBZ</name>
<evidence type="ECO:0000255" key="1">
    <source>
        <dbReference type="HAMAP-Rule" id="MF_00141"/>
    </source>
</evidence>
<organism>
    <name type="scientific">Borreliella burgdorferi (strain ZS7)</name>
    <name type="common">Borrelia burgdorferi</name>
    <dbReference type="NCBI Taxonomy" id="445985"/>
    <lineage>
        <taxon>Bacteria</taxon>
        <taxon>Pseudomonadati</taxon>
        <taxon>Spirochaetota</taxon>
        <taxon>Spirochaetia</taxon>
        <taxon>Spirochaetales</taxon>
        <taxon>Borreliaceae</taxon>
        <taxon>Borreliella</taxon>
    </lineage>
</organism>
<protein>
    <recommendedName>
        <fullName evidence="1">Elongation factor P</fullName>
        <shortName evidence="1">EF-P</shortName>
    </recommendedName>
</protein>